<sequence>MQVFWFLPTHGDSRYLGTAEGARQVDQAYLQQVAVAADTLGYEGVLIPTGRSCEDPWIVAASLIPATRRLRFLVAVRPGLVAPTLAARMAATFDRLSQGRLLVNLVTGGDPGELAGDGLFLDHAQRYEASAEFIRIWRETLAASHEGAALDYTGRHLSVKGARVLFPPVQRPHPPVYFGGSSEAAHALAAEQVDTYLTWGEPPAAVAEKIADVRRRAARHGRTVRFGIRLHVIVRETEDAAWQAADTLISKLDDDTVARAQAAFRKMDSAGQQRMAALHANGIRRSRAELEISPNLWAGVGLVRGGAGTALVGDPHTVAARMREYADLGIDTFVLSGYPHLEEAYRFAELVFPLLPRAVRDTLPGSVLNGPFGEVIATGIVPRVAAS</sequence>
<comment type="function">
    <text evidence="1">Catalyzes the desulfonation of aliphatic sulfonates.</text>
</comment>
<comment type="catalytic activity">
    <reaction evidence="1">
        <text>an alkanesulfonate + FMNH2 + O2 = an aldehyde + FMN + sulfite + H2O + 2 H(+)</text>
        <dbReference type="Rhea" id="RHEA:23064"/>
        <dbReference type="ChEBI" id="CHEBI:15377"/>
        <dbReference type="ChEBI" id="CHEBI:15378"/>
        <dbReference type="ChEBI" id="CHEBI:15379"/>
        <dbReference type="ChEBI" id="CHEBI:17359"/>
        <dbReference type="ChEBI" id="CHEBI:17478"/>
        <dbReference type="ChEBI" id="CHEBI:57618"/>
        <dbReference type="ChEBI" id="CHEBI:58210"/>
        <dbReference type="ChEBI" id="CHEBI:134249"/>
        <dbReference type="EC" id="1.14.14.5"/>
    </reaction>
</comment>
<comment type="similarity">
    <text evidence="1">Belongs to the SsuD family.</text>
</comment>
<name>SSUD_RALN1</name>
<protein>
    <recommendedName>
        <fullName evidence="1">Alkanesulfonate monooxygenase</fullName>
        <ecNumber evidence="1">1.14.14.5</ecNumber>
    </recommendedName>
    <alternativeName>
        <fullName evidence="1">FMNH2-dependent aliphatic sulfonate monooxygenase</fullName>
    </alternativeName>
</protein>
<accession>Q8XZQ6</accession>
<organism>
    <name type="scientific">Ralstonia nicotianae (strain ATCC BAA-1114 / GMI1000)</name>
    <name type="common">Ralstonia solanacearum</name>
    <dbReference type="NCBI Taxonomy" id="267608"/>
    <lineage>
        <taxon>Bacteria</taxon>
        <taxon>Pseudomonadati</taxon>
        <taxon>Pseudomonadota</taxon>
        <taxon>Betaproteobacteria</taxon>
        <taxon>Burkholderiales</taxon>
        <taxon>Burkholderiaceae</taxon>
        <taxon>Ralstonia</taxon>
        <taxon>Ralstonia solanacearum species complex</taxon>
    </lineage>
</organism>
<evidence type="ECO:0000255" key="1">
    <source>
        <dbReference type="HAMAP-Rule" id="MF_01229"/>
    </source>
</evidence>
<reference key="1">
    <citation type="journal article" date="2002" name="Nature">
        <title>Genome sequence of the plant pathogen Ralstonia solanacearum.</title>
        <authorList>
            <person name="Salanoubat M."/>
            <person name="Genin S."/>
            <person name="Artiguenave F."/>
            <person name="Gouzy J."/>
            <person name="Mangenot S."/>
            <person name="Arlat M."/>
            <person name="Billault A."/>
            <person name="Brottier P."/>
            <person name="Camus J.-C."/>
            <person name="Cattolico L."/>
            <person name="Chandler M."/>
            <person name="Choisne N."/>
            <person name="Claudel-Renard C."/>
            <person name="Cunnac S."/>
            <person name="Demange N."/>
            <person name="Gaspin C."/>
            <person name="Lavie M."/>
            <person name="Moisan A."/>
            <person name="Robert C."/>
            <person name="Saurin W."/>
            <person name="Schiex T."/>
            <person name="Siguier P."/>
            <person name="Thebault P."/>
            <person name="Whalen M."/>
            <person name="Wincker P."/>
            <person name="Levy M."/>
            <person name="Weissenbach J."/>
            <person name="Boucher C.A."/>
        </authorList>
    </citation>
    <scope>NUCLEOTIDE SEQUENCE [LARGE SCALE GENOMIC DNA]</scope>
    <source>
        <strain>ATCC BAA-1114 / GMI1000</strain>
    </source>
</reference>
<keyword id="KW-0285">Flavoprotein</keyword>
<keyword id="KW-0288">FMN</keyword>
<keyword id="KW-0503">Monooxygenase</keyword>
<keyword id="KW-0560">Oxidoreductase</keyword>
<keyword id="KW-1185">Reference proteome</keyword>
<proteinExistence type="inferred from homology"/>
<feature type="chain" id="PRO_0000216716" description="Alkanesulfonate monooxygenase">
    <location>
        <begin position="1"/>
        <end position="387"/>
    </location>
</feature>
<dbReference type="EC" id="1.14.14.5" evidence="1"/>
<dbReference type="EMBL" id="AL646052">
    <property type="protein sequence ID" value="CAD15041.1"/>
    <property type="molecule type" value="Genomic_DNA"/>
</dbReference>
<dbReference type="RefSeq" id="WP_011001288.1">
    <property type="nucleotide sequence ID" value="NC_003295.1"/>
</dbReference>
<dbReference type="SMR" id="Q8XZQ6"/>
<dbReference type="STRING" id="267608.RSc1339"/>
<dbReference type="EnsemblBacteria" id="CAD15041">
    <property type="protein sequence ID" value="CAD15041"/>
    <property type="gene ID" value="RSc1339"/>
</dbReference>
<dbReference type="KEGG" id="rso:RSc1339"/>
<dbReference type="PATRIC" id="fig|267608.8.peg.1364"/>
<dbReference type="eggNOG" id="COG2141">
    <property type="taxonomic scope" value="Bacteria"/>
</dbReference>
<dbReference type="HOGENOM" id="CLU_027853_1_0_4"/>
<dbReference type="Proteomes" id="UP000001436">
    <property type="component" value="Chromosome"/>
</dbReference>
<dbReference type="GO" id="GO:0008726">
    <property type="term" value="F:alkanesulfonate monooxygenase activity"/>
    <property type="evidence" value="ECO:0007669"/>
    <property type="project" value="UniProtKB-UniRule"/>
</dbReference>
<dbReference type="GO" id="GO:0046306">
    <property type="term" value="P:alkanesulfonate catabolic process"/>
    <property type="evidence" value="ECO:0007669"/>
    <property type="project" value="TreeGrafter"/>
</dbReference>
<dbReference type="CDD" id="cd01094">
    <property type="entry name" value="Alkanesulfonate_monoxygenase"/>
    <property type="match status" value="1"/>
</dbReference>
<dbReference type="Gene3D" id="3.20.20.30">
    <property type="entry name" value="Luciferase-like domain"/>
    <property type="match status" value="1"/>
</dbReference>
<dbReference type="HAMAP" id="MF_01229">
    <property type="entry name" value="Alkanesulf_monooxygen"/>
    <property type="match status" value="1"/>
</dbReference>
<dbReference type="InterPro" id="IPR019911">
    <property type="entry name" value="Alkanesulphonate_mOase_FMN-dep"/>
</dbReference>
<dbReference type="InterPro" id="IPR011251">
    <property type="entry name" value="Luciferase-like_dom"/>
</dbReference>
<dbReference type="InterPro" id="IPR036661">
    <property type="entry name" value="Luciferase-like_sf"/>
</dbReference>
<dbReference type="InterPro" id="IPR050172">
    <property type="entry name" value="SsuD_RutA_monooxygenase"/>
</dbReference>
<dbReference type="NCBIfam" id="TIGR03565">
    <property type="entry name" value="alk_sulf_monoox"/>
    <property type="match status" value="1"/>
</dbReference>
<dbReference type="NCBIfam" id="NF001939">
    <property type="entry name" value="PRK00719.1"/>
    <property type="match status" value="1"/>
</dbReference>
<dbReference type="PANTHER" id="PTHR42847">
    <property type="entry name" value="ALKANESULFONATE MONOOXYGENASE"/>
    <property type="match status" value="1"/>
</dbReference>
<dbReference type="PANTHER" id="PTHR42847:SF4">
    <property type="entry name" value="ALKANESULFONATE MONOOXYGENASE-RELATED"/>
    <property type="match status" value="1"/>
</dbReference>
<dbReference type="Pfam" id="PF00296">
    <property type="entry name" value="Bac_luciferase"/>
    <property type="match status" value="1"/>
</dbReference>
<dbReference type="SUPFAM" id="SSF51679">
    <property type="entry name" value="Bacterial luciferase-like"/>
    <property type="match status" value="1"/>
</dbReference>
<gene>
    <name evidence="1" type="primary">ssuD</name>
    <name type="ordered locus">RSc1339</name>
    <name type="ORF">RS02861</name>
</gene>